<accession>Q5Z1S2</accession>
<sequence>MIQQESRLRVADNTGAKEILCIRVLGGSSRRYAGIGDVIVATVKDAIPGGNVKRGDVVKAVVVRTVKERRRPDGSYIKFDENAAVLIKADNDPRGTRIFGPVGRELRDKKFMKIVSLAPEVL</sequence>
<evidence type="ECO:0000255" key="1">
    <source>
        <dbReference type="HAMAP-Rule" id="MF_01367"/>
    </source>
</evidence>
<evidence type="ECO:0000305" key="2"/>
<keyword id="KW-1185">Reference proteome</keyword>
<keyword id="KW-0687">Ribonucleoprotein</keyword>
<keyword id="KW-0689">Ribosomal protein</keyword>
<keyword id="KW-0694">RNA-binding</keyword>
<keyword id="KW-0699">rRNA-binding</keyword>
<reference key="1">
    <citation type="journal article" date="2004" name="Proc. Natl. Acad. Sci. U.S.A.">
        <title>The complete genomic sequence of Nocardia farcinica IFM 10152.</title>
        <authorList>
            <person name="Ishikawa J."/>
            <person name="Yamashita A."/>
            <person name="Mikami Y."/>
            <person name="Hoshino Y."/>
            <person name="Kurita H."/>
            <person name="Hotta K."/>
            <person name="Shiba T."/>
            <person name="Hattori M."/>
        </authorList>
    </citation>
    <scope>NUCLEOTIDE SEQUENCE [LARGE SCALE GENOMIC DNA]</scope>
    <source>
        <strain>IFM 10152</strain>
    </source>
</reference>
<protein>
    <recommendedName>
        <fullName evidence="1">Large ribosomal subunit protein uL14</fullName>
    </recommendedName>
    <alternativeName>
        <fullName evidence="2">50S ribosomal protein L14</fullName>
    </alternativeName>
</protein>
<name>RL14_NOCFA</name>
<proteinExistence type="inferred from homology"/>
<organism>
    <name type="scientific">Nocardia farcinica (strain IFM 10152)</name>
    <dbReference type="NCBI Taxonomy" id="247156"/>
    <lineage>
        <taxon>Bacteria</taxon>
        <taxon>Bacillati</taxon>
        <taxon>Actinomycetota</taxon>
        <taxon>Actinomycetes</taxon>
        <taxon>Mycobacteriales</taxon>
        <taxon>Nocardiaceae</taxon>
        <taxon>Nocardia</taxon>
    </lineage>
</organism>
<comment type="function">
    <text evidence="1">Binds to 23S rRNA. Forms part of two intersubunit bridges in the 70S ribosome.</text>
</comment>
<comment type="subunit">
    <text evidence="1">Part of the 50S ribosomal subunit. Forms a cluster with proteins L3 and L19. In the 70S ribosome, L14 and L19 interact and together make contacts with the 16S rRNA in bridges B5 and B8.</text>
</comment>
<comment type="similarity">
    <text evidence="1">Belongs to the universal ribosomal protein uL14 family.</text>
</comment>
<feature type="chain" id="PRO_0000266514" description="Large ribosomal subunit protein uL14">
    <location>
        <begin position="1"/>
        <end position="122"/>
    </location>
</feature>
<gene>
    <name evidence="1" type="primary">rplN</name>
    <name type="ordered locus">NFA_7740</name>
</gene>
<dbReference type="EMBL" id="AP006618">
    <property type="protein sequence ID" value="BAD55619.1"/>
    <property type="molecule type" value="Genomic_DNA"/>
</dbReference>
<dbReference type="RefSeq" id="WP_011207305.1">
    <property type="nucleotide sequence ID" value="NC_006361.1"/>
</dbReference>
<dbReference type="SMR" id="Q5Z1S2"/>
<dbReference type="STRING" id="247156.NFA_7740"/>
<dbReference type="GeneID" id="61131606"/>
<dbReference type="KEGG" id="nfa:NFA_7740"/>
<dbReference type="eggNOG" id="COG0093">
    <property type="taxonomic scope" value="Bacteria"/>
</dbReference>
<dbReference type="HOGENOM" id="CLU_095071_2_1_11"/>
<dbReference type="OrthoDB" id="9806379at2"/>
<dbReference type="Proteomes" id="UP000006820">
    <property type="component" value="Chromosome"/>
</dbReference>
<dbReference type="GO" id="GO:0022625">
    <property type="term" value="C:cytosolic large ribosomal subunit"/>
    <property type="evidence" value="ECO:0007669"/>
    <property type="project" value="TreeGrafter"/>
</dbReference>
<dbReference type="GO" id="GO:0070180">
    <property type="term" value="F:large ribosomal subunit rRNA binding"/>
    <property type="evidence" value="ECO:0007669"/>
    <property type="project" value="TreeGrafter"/>
</dbReference>
<dbReference type="GO" id="GO:0003735">
    <property type="term" value="F:structural constituent of ribosome"/>
    <property type="evidence" value="ECO:0007669"/>
    <property type="project" value="InterPro"/>
</dbReference>
<dbReference type="GO" id="GO:0006412">
    <property type="term" value="P:translation"/>
    <property type="evidence" value="ECO:0007669"/>
    <property type="project" value="UniProtKB-UniRule"/>
</dbReference>
<dbReference type="CDD" id="cd00337">
    <property type="entry name" value="Ribosomal_uL14"/>
    <property type="match status" value="1"/>
</dbReference>
<dbReference type="FunFam" id="2.40.150.20:FF:000001">
    <property type="entry name" value="50S ribosomal protein L14"/>
    <property type="match status" value="1"/>
</dbReference>
<dbReference type="Gene3D" id="2.40.150.20">
    <property type="entry name" value="Ribosomal protein L14"/>
    <property type="match status" value="1"/>
</dbReference>
<dbReference type="HAMAP" id="MF_01367">
    <property type="entry name" value="Ribosomal_uL14"/>
    <property type="match status" value="1"/>
</dbReference>
<dbReference type="InterPro" id="IPR000218">
    <property type="entry name" value="Ribosomal_uL14"/>
</dbReference>
<dbReference type="InterPro" id="IPR005745">
    <property type="entry name" value="Ribosomal_uL14_bac-type"/>
</dbReference>
<dbReference type="InterPro" id="IPR019972">
    <property type="entry name" value="Ribosomal_uL14_CS"/>
</dbReference>
<dbReference type="InterPro" id="IPR036853">
    <property type="entry name" value="Ribosomal_uL14_sf"/>
</dbReference>
<dbReference type="NCBIfam" id="TIGR01067">
    <property type="entry name" value="rplN_bact"/>
    <property type="match status" value="1"/>
</dbReference>
<dbReference type="PANTHER" id="PTHR11761">
    <property type="entry name" value="50S/60S RIBOSOMAL PROTEIN L14/L23"/>
    <property type="match status" value="1"/>
</dbReference>
<dbReference type="PANTHER" id="PTHR11761:SF3">
    <property type="entry name" value="LARGE RIBOSOMAL SUBUNIT PROTEIN UL14M"/>
    <property type="match status" value="1"/>
</dbReference>
<dbReference type="Pfam" id="PF00238">
    <property type="entry name" value="Ribosomal_L14"/>
    <property type="match status" value="1"/>
</dbReference>
<dbReference type="SMART" id="SM01374">
    <property type="entry name" value="Ribosomal_L14"/>
    <property type="match status" value="1"/>
</dbReference>
<dbReference type="SUPFAM" id="SSF50193">
    <property type="entry name" value="Ribosomal protein L14"/>
    <property type="match status" value="1"/>
</dbReference>
<dbReference type="PROSITE" id="PS00049">
    <property type="entry name" value="RIBOSOMAL_L14"/>
    <property type="match status" value="1"/>
</dbReference>